<protein>
    <recommendedName>
        <fullName evidence="1">DNA-directed RNA polymerase subunit alpha</fullName>
        <shortName evidence="1">RNAP subunit alpha</shortName>
        <ecNumber evidence="1">2.7.7.6</ecNumber>
    </recommendedName>
    <alternativeName>
        <fullName evidence="1">RNA polymerase subunit alpha</fullName>
    </alternativeName>
    <alternativeName>
        <fullName evidence="1">Transcriptase subunit alpha</fullName>
    </alternativeName>
</protein>
<feature type="chain" id="PRO_1000091947" description="DNA-directed RNA polymerase subunit alpha">
    <location>
        <begin position="1"/>
        <end position="339"/>
    </location>
</feature>
<feature type="region of interest" description="Alpha N-terminal domain (alpha-NTD)" evidence="1">
    <location>
        <begin position="1"/>
        <end position="237"/>
    </location>
</feature>
<feature type="region of interest" description="Alpha C-terminal domain (alpha-CTD)" evidence="1">
    <location>
        <begin position="256"/>
        <end position="339"/>
    </location>
</feature>
<accession>A8ZV82</accession>
<evidence type="ECO:0000255" key="1">
    <source>
        <dbReference type="HAMAP-Rule" id="MF_00059"/>
    </source>
</evidence>
<comment type="function">
    <text evidence="1">DNA-dependent RNA polymerase catalyzes the transcription of DNA into RNA using the four ribonucleoside triphosphates as substrates.</text>
</comment>
<comment type="catalytic activity">
    <reaction evidence="1">
        <text>RNA(n) + a ribonucleoside 5'-triphosphate = RNA(n+1) + diphosphate</text>
        <dbReference type="Rhea" id="RHEA:21248"/>
        <dbReference type="Rhea" id="RHEA-COMP:14527"/>
        <dbReference type="Rhea" id="RHEA-COMP:17342"/>
        <dbReference type="ChEBI" id="CHEBI:33019"/>
        <dbReference type="ChEBI" id="CHEBI:61557"/>
        <dbReference type="ChEBI" id="CHEBI:140395"/>
        <dbReference type="EC" id="2.7.7.6"/>
    </reaction>
</comment>
<comment type="subunit">
    <text evidence="1">Homodimer. The RNAP catalytic core consists of 2 alpha, 1 beta, 1 beta' and 1 omega subunit. When a sigma factor is associated with the core the holoenzyme is formed, which can initiate transcription.</text>
</comment>
<comment type="domain">
    <text evidence="1">The N-terminal domain is essential for RNAP assembly and basal transcription, whereas the C-terminal domain is involved in interaction with transcriptional regulators and with upstream promoter elements.</text>
</comment>
<comment type="similarity">
    <text evidence="1">Belongs to the RNA polymerase alpha chain family.</text>
</comment>
<sequence>MENELMYMNWQEMIQPDKIQVEAATPFYGKFICEPLGRGFGITIGNALRRIIISSLHGAAITSVKIDNVMHEYSTVEGVLEDVSEIILNLKEVRLKTSTAAAKTIRIDAAGPGVVTAGDIASPDGRVEILNPESHIATLSEGATLKMEMTVKVGRGYALAEANKDEETPVNTIPIDAMFSPIRRVNYVVGNSRVKQKTDFDKLTLEVWTDGSVLPEDAVAFAAKIMKEQMNVFINFDESAEPEHAGRKDDSGGKVFNENLYRSVNELELSVRSSNCLKNAEIDKLYQLVQKTESEMLKTKNFGRKSLNEIKELLAEMGLSLGMDLEGFVPPAEDNKEGE</sequence>
<gene>
    <name evidence="1" type="primary">rpoA</name>
    <name type="ordered locus">Dole_0733</name>
</gene>
<dbReference type="EC" id="2.7.7.6" evidence="1"/>
<dbReference type="EMBL" id="CP000859">
    <property type="protein sequence ID" value="ABW66543.1"/>
    <property type="molecule type" value="Genomic_DNA"/>
</dbReference>
<dbReference type="RefSeq" id="WP_012174161.1">
    <property type="nucleotide sequence ID" value="NC_009943.1"/>
</dbReference>
<dbReference type="SMR" id="A8ZV82"/>
<dbReference type="STRING" id="96561.Dole_0733"/>
<dbReference type="KEGG" id="dol:Dole_0733"/>
<dbReference type="eggNOG" id="COG0202">
    <property type="taxonomic scope" value="Bacteria"/>
</dbReference>
<dbReference type="HOGENOM" id="CLU_053084_0_1_7"/>
<dbReference type="OrthoDB" id="9805706at2"/>
<dbReference type="Proteomes" id="UP000008561">
    <property type="component" value="Chromosome"/>
</dbReference>
<dbReference type="GO" id="GO:0005737">
    <property type="term" value="C:cytoplasm"/>
    <property type="evidence" value="ECO:0007669"/>
    <property type="project" value="UniProtKB-ARBA"/>
</dbReference>
<dbReference type="GO" id="GO:0000428">
    <property type="term" value="C:DNA-directed RNA polymerase complex"/>
    <property type="evidence" value="ECO:0007669"/>
    <property type="project" value="UniProtKB-KW"/>
</dbReference>
<dbReference type="GO" id="GO:0003677">
    <property type="term" value="F:DNA binding"/>
    <property type="evidence" value="ECO:0007669"/>
    <property type="project" value="UniProtKB-UniRule"/>
</dbReference>
<dbReference type="GO" id="GO:0003899">
    <property type="term" value="F:DNA-directed RNA polymerase activity"/>
    <property type="evidence" value="ECO:0007669"/>
    <property type="project" value="UniProtKB-UniRule"/>
</dbReference>
<dbReference type="GO" id="GO:0046983">
    <property type="term" value="F:protein dimerization activity"/>
    <property type="evidence" value="ECO:0007669"/>
    <property type="project" value="InterPro"/>
</dbReference>
<dbReference type="GO" id="GO:0006351">
    <property type="term" value="P:DNA-templated transcription"/>
    <property type="evidence" value="ECO:0007669"/>
    <property type="project" value="UniProtKB-UniRule"/>
</dbReference>
<dbReference type="CDD" id="cd06928">
    <property type="entry name" value="RNAP_alpha_NTD"/>
    <property type="match status" value="1"/>
</dbReference>
<dbReference type="FunFam" id="1.10.150.20:FF:000001">
    <property type="entry name" value="DNA-directed RNA polymerase subunit alpha"/>
    <property type="match status" value="1"/>
</dbReference>
<dbReference type="FunFam" id="2.170.120.12:FF:000001">
    <property type="entry name" value="DNA-directed RNA polymerase subunit alpha"/>
    <property type="match status" value="1"/>
</dbReference>
<dbReference type="Gene3D" id="1.10.150.20">
    <property type="entry name" value="5' to 3' exonuclease, C-terminal subdomain"/>
    <property type="match status" value="1"/>
</dbReference>
<dbReference type="Gene3D" id="2.170.120.12">
    <property type="entry name" value="DNA-directed RNA polymerase, insert domain"/>
    <property type="match status" value="1"/>
</dbReference>
<dbReference type="Gene3D" id="3.30.1360.10">
    <property type="entry name" value="RNA polymerase, RBP11-like subunit"/>
    <property type="match status" value="1"/>
</dbReference>
<dbReference type="HAMAP" id="MF_00059">
    <property type="entry name" value="RNApol_bact_RpoA"/>
    <property type="match status" value="1"/>
</dbReference>
<dbReference type="InterPro" id="IPR011262">
    <property type="entry name" value="DNA-dir_RNA_pol_insert"/>
</dbReference>
<dbReference type="InterPro" id="IPR011263">
    <property type="entry name" value="DNA-dir_RNA_pol_RpoA/D/Rpb3"/>
</dbReference>
<dbReference type="InterPro" id="IPR011773">
    <property type="entry name" value="DNA-dir_RpoA"/>
</dbReference>
<dbReference type="InterPro" id="IPR036603">
    <property type="entry name" value="RBP11-like"/>
</dbReference>
<dbReference type="InterPro" id="IPR011260">
    <property type="entry name" value="RNAP_asu_C"/>
</dbReference>
<dbReference type="InterPro" id="IPR036643">
    <property type="entry name" value="RNApol_insert_sf"/>
</dbReference>
<dbReference type="NCBIfam" id="NF003513">
    <property type="entry name" value="PRK05182.1-2"/>
    <property type="match status" value="1"/>
</dbReference>
<dbReference type="NCBIfam" id="NF003519">
    <property type="entry name" value="PRK05182.2-5"/>
    <property type="match status" value="1"/>
</dbReference>
<dbReference type="NCBIfam" id="TIGR02027">
    <property type="entry name" value="rpoA"/>
    <property type="match status" value="1"/>
</dbReference>
<dbReference type="Pfam" id="PF01000">
    <property type="entry name" value="RNA_pol_A_bac"/>
    <property type="match status" value="1"/>
</dbReference>
<dbReference type="Pfam" id="PF03118">
    <property type="entry name" value="RNA_pol_A_CTD"/>
    <property type="match status" value="1"/>
</dbReference>
<dbReference type="Pfam" id="PF01193">
    <property type="entry name" value="RNA_pol_L"/>
    <property type="match status" value="1"/>
</dbReference>
<dbReference type="SMART" id="SM00662">
    <property type="entry name" value="RPOLD"/>
    <property type="match status" value="1"/>
</dbReference>
<dbReference type="SUPFAM" id="SSF47789">
    <property type="entry name" value="C-terminal domain of RNA polymerase alpha subunit"/>
    <property type="match status" value="1"/>
</dbReference>
<dbReference type="SUPFAM" id="SSF56553">
    <property type="entry name" value="Insert subdomain of RNA polymerase alpha subunit"/>
    <property type="match status" value="1"/>
</dbReference>
<dbReference type="SUPFAM" id="SSF55257">
    <property type="entry name" value="RBP11-like subunits of RNA polymerase"/>
    <property type="match status" value="1"/>
</dbReference>
<keyword id="KW-0240">DNA-directed RNA polymerase</keyword>
<keyword id="KW-0548">Nucleotidyltransferase</keyword>
<keyword id="KW-1185">Reference proteome</keyword>
<keyword id="KW-0804">Transcription</keyword>
<keyword id="KW-0808">Transferase</keyword>
<name>RPOA_DESOH</name>
<proteinExistence type="inferred from homology"/>
<reference key="1">
    <citation type="submission" date="2007-10" db="EMBL/GenBank/DDBJ databases">
        <title>Complete sequence of Desulfococcus oleovorans Hxd3.</title>
        <authorList>
            <consortium name="US DOE Joint Genome Institute"/>
            <person name="Copeland A."/>
            <person name="Lucas S."/>
            <person name="Lapidus A."/>
            <person name="Barry K."/>
            <person name="Glavina del Rio T."/>
            <person name="Dalin E."/>
            <person name="Tice H."/>
            <person name="Pitluck S."/>
            <person name="Kiss H."/>
            <person name="Brettin T."/>
            <person name="Bruce D."/>
            <person name="Detter J.C."/>
            <person name="Han C."/>
            <person name="Schmutz J."/>
            <person name="Larimer F."/>
            <person name="Land M."/>
            <person name="Hauser L."/>
            <person name="Kyrpides N."/>
            <person name="Kim E."/>
            <person name="Wawrik B."/>
            <person name="Richardson P."/>
        </authorList>
    </citation>
    <scope>NUCLEOTIDE SEQUENCE [LARGE SCALE GENOMIC DNA]</scope>
    <source>
        <strain>DSM 6200 / JCM 39069 / Hxd3</strain>
    </source>
</reference>
<organism>
    <name type="scientific">Desulfosudis oleivorans (strain DSM 6200 / JCM 39069 / Hxd3)</name>
    <name type="common">Desulfococcus oleovorans</name>
    <dbReference type="NCBI Taxonomy" id="96561"/>
    <lineage>
        <taxon>Bacteria</taxon>
        <taxon>Pseudomonadati</taxon>
        <taxon>Thermodesulfobacteriota</taxon>
        <taxon>Desulfobacteria</taxon>
        <taxon>Desulfobacterales</taxon>
        <taxon>Desulfosudaceae</taxon>
        <taxon>Desulfosudis</taxon>
    </lineage>
</organism>